<organism>
    <name type="scientific">Homo sapiens</name>
    <name type="common">Human</name>
    <dbReference type="NCBI Taxonomy" id="9606"/>
    <lineage>
        <taxon>Eukaryota</taxon>
        <taxon>Metazoa</taxon>
        <taxon>Chordata</taxon>
        <taxon>Craniata</taxon>
        <taxon>Vertebrata</taxon>
        <taxon>Euteleostomi</taxon>
        <taxon>Mammalia</taxon>
        <taxon>Eutheria</taxon>
        <taxon>Euarchontoglires</taxon>
        <taxon>Primates</taxon>
        <taxon>Haplorrhini</taxon>
        <taxon>Catarrhini</taxon>
        <taxon>Hominidae</taxon>
        <taxon>Homo</taxon>
    </lineage>
</organism>
<dbReference type="EMBL" id="AC122684">
    <property type="status" value="NOT_ANNOTATED_CDS"/>
    <property type="molecule type" value="Genomic_DNA"/>
</dbReference>
<dbReference type="EMBL" id="CH471054">
    <property type="protein sequence ID" value="EAW96806.1"/>
    <property type="molecule type" value="Genomic_DNA"/>
</dbReference>
<dbReference type="EMBL" id="BC136957">
    <property type="protein sequence ID" value="AAI36958.1"/>
    <property type="molecule type" value="mRNA"/>
</dbReference>
<dbReference type="EMBL" id="BC136965">
    <property type="protein sequence ID" value="AAI36966.1"/>
    <property type="molecule type" value="mRNA"/>
</dbReference>
<dbReference type="EMBL" id="AF399506">
    <property type="protein sequence ID" value="AAK94991.1"/>
    <property type="molecule type" value="Genomic_DNA"/>
</dbReference>
<dbReference type="CCDS" id="CCDS31818.1"/>
<dbReference type="RefSeq" id="NP_001005182.1">
    <property type="nucleotide sequence ID" value="NM_001005182.2"/>
</dbReference>
<dbReference type="SMR" id="Q96RD1"/>
<dbReference type="BioGRID" id="133512">
    <property type="interactions" value="1"/>
</dbReference>
<dbReference type="FunCoup" id="Q96RD1">
    <property type="interactions" value="418"/>
</dbReference>
<dbReference type="IntAct" id="Q96RD1">
    <property type="interactions" value="1"/>
</dbReference>
<dbReference type="STRING" id="9606.ENSP00000492978"/>
<dbReference type="GlyCosmos" id="Q96RD1">
    <property type="glycosylation" value="1 site, No reported glycans"/>
</dbReference>
<dbReference type="GlyGen" id="Q96RD1">
    <property type="glycosylation" value="1 site"/>
</dbReference>
<dbReference type="iPTMnet" id="Q96RD1"/>
<dbReference type="PhosphoSitePlus" id="Q96RD1"/>
<dbReference type="BioMuta" id="OR6C1"/>
<dbReference type="DMDM" id="85541046"/>
<dbReference type="PaxDb" id="9606-ENSP00000368990"/>
<dbReference type="Antibodypedia" id="68584">
    <property type="antibodies" value="24 antibodies from 14 providers"/>
</dbReference>
<dbReference type="DNASU" id="390321"/>
<dbReference type="Ensembl" id="ENST00000379668.3">
    <property type="protein sequence ID" value="ENSP00000368990.2"/>
    <property type="gene ID" value="ENSG00000205330.4"/>
</dbReference>
<dbReference type="Ensembl" id="ENST00000642104.1">
    <property type="protein sequence ID" value="ENSP00000492978.1"/>
    <property type="gene ID" value="ENSG00000205330.4"/>
</dbReference>
<dbReference type="GeneID" id="390321"/>
<dbReference type="KEGG" id="hsa:390321"/>
<dbReference type="MANE-Select" id="ENST00000642104.1">
    <property type="protein sequence ID" value="ENSP00000492978.1"/>
    <property type="RefSeq nucleotide sequence ID" value="NM_001005182.2"/>
    <property type="RefSeq protein sequence ID" value="NP_001005182.1"/>
</dbReference>
<dbReference type="UCSC" id="uc010spi.3">
    <property type="organism name" value="human"/>
</dbReference>
<dbReference type="AGR" id="HGNC:8355"/>
<dbReference type="CTD" id="390321"/>
<dbReference type="DisGeNET" id="390321"/>
<dbReference type="GeneCards" id="OR6C1"/>
<dbReference type="HGNC" id="HGNC:8355">
    <property type="gene designation" value="OR6C1"/>
</dbReference>
<dbReference type="HPA" id="ENSG00000205330">
    <property type="expression patterns" value="Not detected"/>
</dbReference>
<dbReference type="neXtProt" id="NX_Q96RD1"/>
<dbReference type="OpenTargets" id="ENSG00000205330"/>
<dbReference type="PharmGKB" id="PA32579"/>
<dbReference type="VEuPathDB" id="HostDB:ENSG00000205330"/>
<dbReference type="eggNOG" id="ENOG502SI9E">
    <property type="taxonomic scope" value="Eukaryota"/>
</dbReference>
<dbReference type="GeneTree" id="ENSGT01130000278269"/>
<dbReference type="HOGENOM" id="CLU_012526_1_1_1"/>
<dbReference type="InParanoid" id="Q96RD1"/>
<dbReference type="OMA" id="AITFNDC"/>
<dbReference type="OrthoDB" id="9892295at2759"/>
<dbReference type="PAN-GO" id="Q96RD1">
    <property type="GO annotations" value="1 GO annotation based on evolutionary models"/>
</dbReference>
<dbReference type="PhylomeDB" id="Q96RD1"/>
<dbReference type="TreeFam" id="TF336833"/>
<dbReference type="PathwayCommons" id="Q96RD1"/>
<dbReference type="Reactome" id="R-HSA-9752946">
    <property type="pathway name" value="Expression and translocation of olfactory receptors"/>
</dbReference>
<dbReference type="BioGRID-ORCS" id="390321">
    <property type="hits" value="12 hits in 741 CRISPR screens"/>
</dbReference>
<dbReference type="GeneWiki" id="OR6C1"/>
<dbReference type="GenomeRNAi" id="390321"/>
<dbReference type="Pharos" id="Q96RD1">
    <property type="development level" value="Tdark"/>
</dbReference>
<dbReference type="PRO" id="PR:Q96RD1"/>
<dbReference type="Proteomes" id="UP000005640">
    <property type="component" value="Chromosome 12"/>
</dbReference>
<dbReference type="RNAct" id="Q96RD1">
    <property type="molecule type" value="protein"/>
</dbReference>
<dbReference type="GO" id="GO:0005886">
    <property type="term" value="C:plasma membrane"/>
    <property type="evidence" value="ECO:0007669"/>
    <property type="project" value="UniProtKB-SubCell"/>
</dbReference>
<dbReference type="GO" id="GO:0004930">
    <property type="term" value="F:G protein-coupled receptor activity"/>
    <property type="evidence" value="ECO:0007669"/>
    <property type="project" value="UniProtKB-KW"/>
</dbReference>
<dbReference type="GO" id="GO:0004984">
    <property type="term" value="F:olfactory receptor activity"/>
    <property type="evidence" value="ECO:0000318"/>
    <property type="project" value="GO_Central"/>
</dbReference>
<dbReference type="CDD" id="cd15912">
    <property type="entry name" value="7tmA_OR6C-like"/>
    <property type="match status" value="1"/>
</dbReference>
<dbReference type="FunFam" id="1.10.1220.70:FF:000001">
    <property type="entry name" value="Olfactory receptor"/>
    <property type="match status" value="1"/>
</dbReference>
<dbReference type="FunFam" id="1.20.1070.10:FF:000013">
    <property type="entry name" value="Olfactory receptor"/>
    <property type="match status" value="1"/>
</dbReference>
<dbReference type="Gene3D" id="1.20.1070.10">
    <property type="entry name" value="Rhodopsin 7-helix transmembrane proteins"/>
    <property type="match status" value="1"/>
</dbReference>
<dbReference type="InterPro" id="IPR000276">
    <property type="entry name" value="GPCR_Rhodpsn"/>
</dbReference>
<dbReference type="InterPro" id="IPR017452">
    <property type="entry name" value="GPCR_Rhodpsn_7TM"/>
</dbReference>
<dbReference type="InterPro" id="IPR000725">
    <property type="entry name" value="Olfact_rcpt"/>
</dbReference>
<dbReference type="InterPro" id="IPR047132">
    <property type="entry name" value="Olfact_rcpt_6C-like"/>
</dbReference>
<dbReference type="PANTHER" id="PTHR26454">
    <property type="entry name" value="OLFACTORY RECEPTOR"/>
    <property type="match status" value="1"/>
</dbReference>
<dbReference type="PANTHER" id="PTHR26454:SF27">
    <property type="entry name" value="OLFACTORY RECEPTOR 6C1"/>
    <property type="match status" value="1"/>
</dbReference>
<dbReference type="Pfam" id="PF13853">
    <property type="entry name" value="7tm_4"/>
    <property type="match status" value="1"/>
</dbReference>
<dbReference type="PRINTS" id="PR00237">
    <property type="entry name" value="GPCRRHODOPSN"/>
</dbReference>
<dbReference type="PRINTS" id="PR00245">
    <property type="entry name" value="OLFACTORYR"/>
</dbReference>
<dbReference type="SUPFAM" id="SSF81321">
    <property type="entry name" value="Family A G protein-coupled receptor-like"/>
    <property type="match status" value="1"/>
</dbReference>
<dbReference type="PROSITE" id="PS00237">
    <property type="entry name" value="G_PROTEIN_RECEP_F1_1"/>
    <property type="match status" value="1"/>
</dbReference>
<dbReference type="PROSITE" id="PS50262">
    <property type="entry name" value="G_PROTEIN_RECEP_F1_2"/>
    <property type="match status" value="1"/>
</dbReference>
<name>OR6C1_HUMAN</name>
<comment type="function">
    <text evidence="4">Odorant receptor.</text>
</comment>
<comment type="interaction">
    <interactant intactId="EBI-12905112">
        <id>Q96RD1</id>
    </interactant>
    <interactant intactId="EBI-9087860">
        <id>P32243-2</id>
        <label>OTX2</label>
    </interactant>
    <organismsDiffer>false</organismsDiffer>
    <experiments>3</experiments>
</comment>
<comment type="subcellular location">
    <subcellularLocation>
        <location>Cell membrane</location>
        <topology>Multi-pass membrane protein</topology>
    </subcellularLocation>
</comment>
<comment type="similarity">
    <text evidence="2">Belongs to the G-protein coupled receptor 1 family.</text>
</comment>
<comment type="online information" name="Human Olfactory Receptor Data Exploratorium (HORDE)">
    <link uri="http://genome.weizmann.ac.il/horde/card/index/symbol:OR6C1"/>
</comment>
<proteinExistence type="evidence at protein level"/>
<accession>Q96RD1</accession>
<accession>B2RNM0</accession>
<feature type="chain" id="PRO_0000150623" description="Olfactory receptor 6C1">
    <location>
        <begin position="1"/>
        <end position="312"/>
    </location>
</feature>
<feature type="topological domain" description="Extracellular" evidence="1">
    <location>
        <begin position="1"/>
        <end position="23"/>
    </location>
</feature>
<feature type="transmembrane region" description="Helical; Name=1" evidence="1">
    <location>
        <begin position="24"/>
        <end position="44"/>
    </location>
</feature>
<feature type="topological domain" description="Cytoplasmic" evidence="1">
    <location>
        <begin position="45"/>
        <end position="52"/>
    </location>
</feature>
<feature type="transmembrane region" description="Helical; Name=2" evidence="1">
    <location>
        <begin position="53"/>
        <end position="73"/>
    </location>
</feature>
<feature type="topological domain" description="Extracellular" evidence="1">
    <location>
        <begin position="74"/>
        <end position="97"/>
    </location>
</feature>
<feature type="transmembrane region" description="Helical; Name=3" evidence="1">
    <location>
        <begin position="98"/>
        <end position="118"/>
    </location>
</feature>
<feature type="topological domain" description="Cytoplasmic" evidence="1">
    <location>
        <begin position="119"/>
        <end position="137"/>
    </location>
</feature>
<feature type="transmembrane region" description="Helical; Name=4" evidence="1">
    <location>
        <begin position="138"/>
        <end position="158"/>
    </location>
</feature>
<feature type="topological domain" description="Extracellular" evidence="1">
    <location>
        <begin position="159"/>
        <end position="195"/>
    </location>
</feature>
<feature type="transmembrane region" description="Helical; Name=5" evidence="1">
    <location>
        <begin position="196"/>
        <end position="215"/>
    </location>
</feature>
<feature type="topological domain" description="Cytoplasmic" evidence="1">
    <location>
        <begin position="216"/>
        <end position="235"/>
    </location>
</feature>
<feature type="transmembrane region" description="Helical; Name=6" evidence="1">
    <location>
        <begin position="236"/>
        <end position="256"/>
    </location>
</feature>
<feature type="topological domain" description="Extracellular" evidence="1">
    <location>
        <begin position="257"/>
        <end position="269"/>
    </location>
</feature>
<feature type="transmembrane region" description="Helical; Name=7" evidence="1">
    <location>
        <begin position="270"/>
        <end position="290"/>
    </location>
</feature>
<feature type="topological domain" description="Cytoplasmic" evidence="1">
    <location>
        <begin position="291"/>
        <end position="312"/>
    </location>
</feature>
<feature type="glycosylation site" description="N-linked (GlcNAc...) asparagine" evidence="1">
    <location>
        <position position="3"/>
    </location>
</feature>
<feature type="disulfide bond" evidence="2">
    <location>
        <begin position="95"/>
        <end position="187"/>
    </location>
</feature>
<feature type="sequence variant" id="VAR_034239" description="In dbSNP:rs7132431." evidence="3">
    <original>C</original>
    <variation>Y</variation>
    <location>
        <position position="130"/>
    </location>
</feature>
<feature type="sequence variant" id="VAR_034240" description="In dbSNP:rs7132347." evidence="3">
    <original>H</original>
    <variation>D</variation>
    <location>
        <position position="165"/>
    </location>
</feature>
<feature type="sequence variant" id="VAR_034241" description="In dbSNP:rs7132600.">
    <original>T</original>
    <variation>I</variation>
    <location>
        <position position="222"/>
    </location>
</feature>
<feature type="sequence variant" id="VAR_034242" description="In dbSNP:rs7132916." evidence="3">
    <original>V</original>
    <variation>I</variation>
    <location>
        <position position="246"/>
    </location>
</feature>
<reference key="1">
    <citation type="journal article" date="2006" name="Nature">
        <title>The finished DNA sequence of human chromosome 12.</title>
        <authorList>
            <person name="Scherer S.E."/>
            <person name="Muzny D.M."/>
            <person name="Buhay C.J."/>
            <person name="Chen R."/>
            <person name="Cree A."/>
            <person name="Ding Y."/>
            <person name="Dugan-Rocha S."/>
            <person name="Gill R."/>
            <person name="Gunaratne P."/>
            <person name="Harris R.A."/>
            <person name="Hawes A.C."/>
            <person name="Hernandez J."/>
            <person name="Hodgson A.V."/>
            <person name="Hume J."/>
            <person name="Jackson A."/>
            <person name="Khan Z.M."/>
            <person name="Kovar-Smith C."/>
            <person name="Lewis L.R."/>
            <person name="Lozado R.J."/>
            <person name="Metzker M.L."/>
            <person name="Milosavljevic A."/>
            <person name="Miner G.R."/>
            <person name="Montgomery K.T."/>
            <person name="Morgan M.B."/>
            <person name="Nazareth L.V."/>
            <person name="Scott G."/>
            <person name="Sodergren E."/>
            <person name="Song X.-Z."/>
            <person name="Steffen D."/>
            <person name="Lovering R.C."/>
            <person name="Wheeler D.A."/>
            <person name="Worley K.C."/>
            <person name="Yuan Y."/>
            <person name="Zhang Z."/>
            <person name="Adams C.Q."/>
            <person name="Ansari-Lari M.A."/>
            <person name="Ayele M."/>
            <person name="Brown M.J."/>
            <person name="Chen G."/>
            <person name="Chen Z."/>
            <person name="Clerc-Blankenburg K.P."/>
            <person name="Davis C."/>
            <person name="Delgado O."/>
            <person name="Dinh H.H."/>
            <person name="Draper H."/>
            <person name="Gonzalez-Garay M.L."/>
            <person name="Havlak P."/>
            <person name="Jackson L.R."/>
            <person name="Jacob L.S."/>
            <person name="Kelly S.H."/>
            <person name="Li L."/>
            <person name="Li Z."/>
            <person name="Liu J."/>
            <person name="Liu W."/>
            <person name="Lu J."/>
            <person name="Maheshwari M."/>
            <person name="Nguyen B.-V."/>
            <person name="Okwuonu G.O."/>
            <person name="Pasternak S."/>
            <person name="Perez L.M."/>
            <person name="Plopper F.J.H."/>
            <person name="Santibanez J."/>
            <person name="Shen H."/>
            <person name="Tabor P.E."/>
            <person name="Verduzco D."/>
            <person name="Waldron L."/>
            <person name="Wang Q."/>
            <person name="Williams G.A."/>
            <person name="Zhang J."/>
            <person name="Zhou J."/>
            <person name="Allen C.C."/>
            <person name="Amin A.G."/>
            <person name="Anyalebechi V."/>
            <person name="Bailey M."/>
            <person name="Barbaria J.A."/>
            <person name="Bimage K.E."/>
            <person name="Bryant N.P."/>
            <person name="Burch P.E."/>
            <person name="Burkett C.E."/>
            <person name="Burrell K.L."/>
            <person name="Calderon E."/>
            <person name="Cardenas V."/>
            <person name="Carter K."/>
            <person name="Casias K."/>
            <person name="Cavazos I."/>
            <person name="Cavazos S.R."/>
            <person name="Ceasar H."/>
            <person name="Chacko J."/>
            <person name="Chan S.N."/>
            <person name="Chavez D."/>
            <person name="Christopoulos C."/>
            <person name="Chu J."/>
            <person name="Cockrell R."/>
            <person name="Cox C.D."/>
            <person name="Dang M."/>
            <person name="Dathorne S.R."/>
            <person name="David R."/>
            <person name="Davis C.M."/>
            <person name="Davy-Carroll L."/>
            <person name="Deshazo D.R."/>
            <person name="Donlin J.E."/>
            <person name="D'Souza L."/>
            <person name="Eaves K.A."/>
            <person name="Egan A."/>
            <person name="Emery-Cohen A.J."/>
            <person name="Escotto M."/>
            <person name="Flagg N."/>
            <person name="Forbes L.D."/>
            <person name="Gabisi A.M."/>
            <person name="Garza M."/>
            <person name="Hamilton C."/>
            <person name="Henderson N."/>
            <person name="Hernandez O."/>
            <person name="Hines S."/>
            <person name="Hogues M.E."/>
            <person name="Huang M."/>
            <person name="Idlebird D.G."/>
            <person name="Johnson R."/>
            <person name="Jolivet A."/>
            <person name="Jones S."/>
            <person name="Kagan R."/>
            <person name="King L.M."/>
            <person name="Leal B."/>
            <person name="Lebow H."/>
            <person name="Lee S."/>
            <person name="LeVan J.M."/>
            <person name="Lewis L.C."/>
            <person name="London P."/>
            <person name="Lorensuhewa L.M."/>
            <person name="Loulseged H."/>
            <person name="Lovett D.A."/>
            <person name="Lucier A."/>
            <person name="Lucier R.L."/>
            <person name="Ma J."/>
            <person name="Madu R.C."/>
            <person name="Mapua P."/>
            <person name="Martindale A.D."/>
            <person name="Martinez E."/>
            <person name="Massey E."/>
            <person name="Mawhiney S."/>
            <person name="Meador M.G."/>
            <person name="Mendez S."/>
            <person name="Mercado C."/>
            <person name="Mercado I.C."/>
            <person name="Merritt C.E."/>
            <person name="Miner Z.L."/>
            <person name="Minja E."/>
            <person name="Mitchell T."/>
            <person name="Mohabbat F."/>
            <person name="Mohabbat K."/>
            <person name="Montgomery B."/>
            <person name="Moore N."/>
            <person name="Morris S."/>
            <person name="Munidasa M."/>
            <person name="Ngo R.N."/>
            <person name="Nguyen N.B."/>
            <person name="Nickerson E."/>
            <person name="Nwaokelemeh O.O."/>
            <person name="Nwokenkwo S."/>
            <person name="Obregon M."/>
            <person name="Oguh M."/>
            <person name="Oragunye N."/>
            <person name="Oviedo R.J."/>
            <person name="Parish B.J."/>
            <person name="Parker D.N."/>
            <person name="Parrish J."/>
            <person name="Parks K.L."/>
            <person name="Paul H.A."/>
            <person name="Payton B.A."/>
            <person name="Perez A."/>
            <person name="Perrin W."/>
            <person name="Pickens A."/>
            <person name="Primus E.L."/>
            <person name="Pu L.-L."/>
            <person name="Puazo M."/>
            <person name="Quiles M.M."/>
            <person name="Quiroz J.B."/>
            <person name="Rabata D."/>
            <person name="Reeves K."/>
            <person name="Ruiz S.J."/>
            <person name="Shao H."/>
            <person name="Sisson I."/>
            <person name="Sonaike T."/>
            <person name="Sorelle R.P."/>
            <person name="Sutton A.E."/>
            <person name="Svatek A.F."/>
            <person name="Svetz L.A."/>
            <person name="Tamerisa K.S."/>
            <person name="Taylor T.R."/>
            <person name="Teague B."/>
            <person name="Thomas N."/>
            <person name="Thorn R.D."/>
            <person name="Trejos Z.Y."/>
            <person name="Trevino B.K."/>
            <person name="Ukegbu O.N."/>
            <person name="Urban J.B."/>
            <person name="Vasquez L.I."/>
            <person name="Vera V.A."/>
            <person name="Villasana D.M."/>
            <person name="Wang L."/>
            <person name="Ward-Moore S."/>
            <person name="Warren J.T."/>
            <person name="Wei X."/>
            <person name="White F."/>
            <person name="Williamson A.L."/>
            <person name="Wleczyk R."/>
            <person name="Wooden H.S."/>
            <person name="Wooden S.H."/>
            <person name="Yen J."/>
            <person name="Yoon L."/>
            <person name="Yoon V."/>
            <person name="Zorrilla S.E."/>
            <person name="Nelson D."/>
            <person name="Kucherlapati R."/>
            <person name="Weinstock G."/>
            <person name="Gibbs R.A."/>
        </authorList>
    </citation>
    <scope>NUCLEOTIDE SEQUENCE [LARGE SCALE GENOMIC DNA]</scope>
</reference>
<reference key="2">
    <citation type="submission" date="2005-07" db="EMBL/GenBank/DDBJ databases">
        <authorList>
            <person name="Mural R.J."/>
            <person name="Istrail S."/>
            <person name="Sutton G.G."/>
            <person name="Florea L."/>
            <person name="Halpern A.L."/>
            <person name="Mobarry C.M."/>
            <person name="Lippert R."/>
            <person name="Walenz B."/>
            <person name="Shatkay H."/>
            <person name="Dew I."/>
            <person name="Miller J.R."/>
            <person name="Flanigan M.J."/>
            <person name="Edwards N.J."/>
            <person name="Bolanos R."/>
            <person name="Fasulo D."/>
            <person name="Halldorsson B.V."/>
            <person name="Hannenhalli S."/>
            <person name="Turner R."/>
            <person name="Yooseph S."/>
            <person name="Lu F."/>
            <person name="Nusskern D.R."/>
            <person name="Shue B.C."/>
            <person name="Zheng X.H."/>
            <person name="Zhong F."/>
            <person name="Delcher A.L."/>
            <person name="Huson D.H."/>
            <person name="Kravitz S.A."/>
            <person name="Mouchard L."/>
            <person name="Reinert K."/>
            <person name="Remington K.A."/>
            <person name="Clark A.G."/>
            <person name="Waterman M.S."/>
            <person name="Eichler E.E."/>
            <person name="Adams M.D."/>
            <person name="Hunkapiller M.W."/>
            <person name="Myers E.W."/>
            <person name="Venter J.C."/>
        </authorList>
    </citation>
    <scope>NUCLEOTIDE SEQUENCE [LARGE SCALE GENOMIC DNA]</scope>
</reference>
<reference key="3">
    <citation type="journal article" date="2004" name="Genome Res.">
        <title>The status, quality, and expansion of the NIH full-length cDNA project: the Mammalian Gene Collection (MGC).</title>
        <authorList>
            <consortium name="The MGC Project Team"/>
        </authorList>
    </citation>
    <scope>NUCLEOTIDE SEQUENCE [LARGE SCALE MRNA]</scope>
</reference>
<reference key="4">
    <citation type="journal article" date="2002" name="Genomics">
        <title>DEFOG: a practical scheme for deciphering families of genes.</title>
        <authorList>
            <person name="Fuchs T."/>
            <person name="Malecova B."/>
            <person name="Linhart C."/>
            <person name="Sharan R."/>
            <person name="Khen M."/>
            <person name="Herwig R."/>
            <person name="Shmulevich D."/>
            <person name="Elkon R."/>
            <person name="Steinfath M."/>
            <person name="O'Brien J.K."/>
            <person name="Radelof U."/>
            <person name="Lehrach H."/>
            <person name="Lancet D."/>
            <person name="Shamir R."/>
        </authorList>
    </citation>
    <scope>NUCLEOTIDE SEQUENCE [GENOMIC DNA] OF 66-281</scope>
    <scope>VARIANTS TYR-130; ASP-165 AND ILE-246</scope>
</reference>
<sequence length="312" mass="35660">MRNHTEITEFILLGLTDDPNFQVVIFVFLLITYMLSITGNLTLITITLLDSHLQTPMYFFLRNFSILEISFTTVSIPKFLGNIISGDKTISFNNCIVQLFFFILLGVTEFYLLAAMSYDRYVAICKPLHCLSIMNRRVCTLLVFTSWLVSFLIIFPALMLLLKLHYCRSNIIDHFTCDYFPLLQLACSDTKFLEVMGFSCAAFTLMFTLALIFLSYIYIIRTILRIPSTSQRTKAFSTCSSHMVVVSISYGSCIFMYIKPSAKDRVSLSKGVAILNTSVAPMMNPFIYSLRNQQVKQAFINMARKTVFFTST</sequence>
<keyword id="KW-1003">Cell membrane</keyword>
<keyword id="KW-1015">Disulfide bond</keyword>
<keyword id="KW-0297">G-protein coupled receptor</keyword>
<keyword id="KW-0325">Glycoprotein</keyword>
<keyword id="KW-0472">Membrane</keyword>
<keyword id="KW-0552">Olfaction</keyword>
<keyword id="KW-0675">Receptor</keyword>
<keyword id="KW-1185">Reference proteome</keyword>
<keyword id="KW-0716">Sensory transduction</keyword>
<keyword id="KW-0807">Transducer</keyword>
<keyword id="KW-0812">Transmembrane</keyword>
<keyword id="KW-1133">Transmembrane helix</keyword>
<gene>
    <name type="primary">OR6C1</name>
</gene>
<evidence type="ECO:0000255" key="1"/>
<evidence type="ECO:0000255" key="2">
    <source>
        <dbReference type="PROSITE-ProRule" id="PRU00521"/>
    </source>
</evidence>
<evidence type="ECO:0000269" key="3">
    <source>
    </source>
</evidence>
<evidence type="ECO:0000305" key="4"/>
<protein>
    <recommendedName>
        <fullName>Olfactory receptor 6C1</fullName>
    </recommendedName>
    <alternativeName>
        <fullName>OST267</fullName>
    </alternativeName>
</protein>